<evidence type="ECO:0000255" key="1">
    <source>
        <dbReference type="HAMAP-Rule" id="MF_01382"/>
    </source>
</evidence>
<evidence type="ECO:0000256" key="2">
    <source>
        <dbReference type="SAM" id="MobiDB-lite"/>
    </source>
</evidence>
<dbReference type="EC" id="7.4.2.8" evidence="1"/>
<dbReference type="EMBL" id="CP000492">
    <property type="protein sequence ID" value="ABL65299.1"/>
    <property type="molecule type" value="Genomic_DNA"/>
</dbReference>
<dbReference type="RefSeq" id="WP_011745123.1">
    <property type="nucleotide sequence ID" value="NC_008639.1"/>
</dbReference>
<dbReference type="SMR" id="A1BFX2"/>
<dbReference type="STRING" id="290317.Cpha266_1266"/>
<dbReference type="KEGG" id="cph:Cpha266_1266"/>
<dbReference type="eggNOG" id="COG0653">
    <property type="taxonomic scope" value="Bacteria"/>
</dbReference>
<dbReference type="HOGENOM" id="CLU_005314_0_0_10"/>
<dbReference type="OrthoDB" id="9805579at2"/>
<dbReference type="Proteomes" id="UP000008701">
    <property type="component" value="Chromosome"/>
</dbReference>
<dbReference type="GO" id="GO:0031522">
    <property type="term" value="C:cell envelope Sec protein transport complex"/>
    <property type="evidence" value="ECO:0007669"/>
    <property type="project" value="TreeGrafter"/>
</dbReference>
<dbReference type="GO" id="GO:0005829">
    <property type="term" value="C:cytosol"/>
    <property type="evidence" value="ECO:0007669"/>
    <property type="project" value="TreeGrafter"/>
</dbReference>
<dbReference type="GO" id="GO:0005886">
    <property type="term" value="C:plasma membrane"/>
    <property type="evidence" value="ECO:0007669"/>
    <property type="project" value="UniProtKB-SubCell"/>
</dbReference>
<dbReference type="GO" id="GO:0005524">
    <property type="term" value="F:ATP binding"/>
    <property type="evidence" value="ECO:0007669"/>
    <property type="project" value="UniProtKB-UniRule"/>
</dbReference>
<dbReference type="GO" id="GO:0046872">
    <property type="term" value="F:metal ion binding"/>
    <property type="evidence" value="ECO:0007669"/>
    <property type="project" value="UniProtKB-KW"/>
</dbReference>
<dbReference type="GO" id="GO:0008564">
    <property type="term" value="F:protein-exporting ATPase activity"/>
    <property type="evidence" value="ECO:0007669"/>
    <property type="project" value="UniProtKB-EC"/>
</dbReference>
<dbReference type="GO" id="GO:0065002">
    <property type="term" value="P:intracellular protein transmembrane transport"/>
    <property type="evidence" value="ECO:0007669"/>
    <property type="project" value="UniProtKB-UniRule"/>
</dbReference>
<dbReference type="GO" id="GO:0017038">
    <property type="term" value="P:protein import"/>
    <property type="evidence" value="ECO:0007669"/>
    <property type="project" value="InterPro"/>
</dbReference>
<dbReference type="GO" id="GO:0006605">
    <property type="term" value="P:protein targeting"/>
    <property type="evidence" value="ECO:0007669"/>
    <property type="project" value="UniProtKB-UniRule"/>
</dbReference>
<dbReference type="GO" id="GO:0043952">
    <property type="term" value="P:protein transport by the Sec complex"/>
    <property type="evidence" value="ECO:0007669"/>
    <property type="project" value="TreeGrafter"/>
</dbReference>
<dbReference type="CDD" id="cd17928">
    <property type="entry name" value="DEXDc_SecA"/>
    <property type="match status" value="1"/>
</dbReference>
<dbReference type="CDD" id="cd18803">
    <property type="entry name" value="SF2_C_secA"/>
    <property type="match status" value="1"/>
</dbReference>
<dbReference type="FunFam" id="3.40.50.300:FF:000246">
    <property type="entry name" value="Preprotein translocase subunit SecA"/>
    <property type="match status" value="1"/>
</dbReference>
<dbReference type="FunFam" id="3.40.50.300:FF:000694">
    <property type="entry name" value="Preprotein translocase subunit SecA"/>
    <property type="match status" value="1"/>
</dbReference>
<dbReference type="Gene3D" id="1.10.3060.10">
    <property type="entry name" value="Helical scaffold and wing domains of SecA"/>
    <property type="match status" value="1"/>
</dbReference>
<dbReference type="Gene3D" id="3.40.50.300">
    <property type="entry name" value="P-loop containing nucleotide triphosphate hydrolases"/>
    <property type="match status" value="2"/>
</dbReference>
<dbReference type="Gene3D" id="3.90.1440.10">
    <property type="entry name" value="SecA, preprotein cross-linking domain"/>
    <property type="match status" value="1"/>
</dbReference>
<dbReference type="HAMAP" id="MF_01382">
    <property type="entry name" value="SecA"/>
    <property type="match status" value="1"/>
</dbReference>
<dbReference type="InterPro" id="IPR014001">
    <property type="entry name" value="Helicase_ATP-bd"/>
</dbReference>
<dbReference type="InterPro" id="IPR001650">
    <property type="entry name" value="Helicase_C-like"/>
</dbReference>
<dbReference type="InterPro" id="IPR027417">
    <property type="entry name" value="P-loop_NTPase"/>
</dbReference>
<dbReference type="InterPro" id="IPR004027">
    <property type="entry name" value="SEC_C_motif"/>
</dbReference>
<dbReference type="InterPro" id="IPR000185">
    <property type="entry name" value="SecA"/>
</dbReference>
<dbReference type="InterPro" id="IPR020937">
    <property type="entry name" value="SecA_CS"/>
</dbReference>
<dbReference type="InterPro" id="IPR011115">
    <property type="entry name" value="SecA_DEAD"/>
</dbReference>
<dbReference type="InterPro" id="IPR014018">
    <property type="entry name" value="SecA_motor_DEAD"/>
</dbReference>
<dbReference type="InterPro" id="IPR011130">
    <property type="entry name" value="SecA_preprotein_X-link_dom"/>
</dbReference>
<dbReference type="InterPro" id="IPR044722">
    <property type="entry name" value="SecA_SF2_C"/>
</dbReference>
<dbReference type="InterPro" id="IPR011116">
    <property type="entry name" value="SecA_Wing/Scaffold"/>
</dbReference>
<dbReference type="InterPro" id="IPR036266">
    <property type="entry name" value="SecA_Wing/Scaffold_sf"/>
</dbReference>
<dbReference type="InterPro" id="IPR036670">
    <property type="entry name" value="SecA_X-link_sf"/>
</dbReference>
<dbReference type="NCBIfam" id="TIGR00963">
    <property type="entry name" value="secA"/>
    <property type="match status" value="1"/>
</dbReference>
<dbReference type="PANTHER" id="PTHR30612:SF0">
    <property type="entry name" value="CHLOROPLAST PROTEIN-TRANSPORTING ATPASE"/>
    <property type="match status" value="1"/>
</dbReference>
<dbReference type="PANTHER" id="PTHR30612">
    <property type="entry name" value="SECA INNER MEMBRANE COMPONENT OF SEC PROTEIN SECRETION SYSTEM"/>
    <property type="match status" value="1"/>
</dbReference>
<dbReference type="Pfam" id="PF21090">
    <property type="entry name" value="P-loop_SecA"/>
    <property type="match status" value="2"/>
</dbReference>
<dbReference type="Pfam" id="PF02810">
    <property type="entry name" value="SEC-C"/>
    <property type="match status" value="1"/>
</dbReference>
<dbReference type="Pfam" id="PF07517">
    <property type="entry name" value="SecA_DEAD"/>
    <property type="match status" value="1"/>
</dbReference>
<dbReference type="Pfam" id="PF01043">
    <property type="entry name" value="SecA_PP_bind"/>
    <property type="match status" value="1"/>
</dbReference>
<dbReference type="Pfam" id="PF07516">
    <property type="entry name" value="SecA_SW"/>
    <property type="match status" value="1"/>
</dbReference>
<dbReference type="PRINTS" id="PR00906">
    <property type="entry name" value="SECA"/>
</dbReference>
<dbReference type="SMART" id="SM00957">
    <property type="entry name" value="SecA_DEAD"/>
    <property type="match status" value="1"/>
</dbReference>
<dbReference type="SMART" id="SM00958">
    <property type="entry name" value="SecA_PP_bind"/>
    <property type="match status" value="1"/>
</dbReference>
<dbReference type="SUPFAM" id="SSF81886">
    <property type="entry name" value="Helical scaffold and wing domains of SecA"/>
    <property type="match status" value="1"/>
</dbReference>
<dbReference type="SUPFAM" id="SSF52540">
    <property type="entry name" value="P-loop containing nucleoside triphosphate hydrolases"/>
    <property type="match status" value="2"/>
</dbReference>
<dbReference type="SUPFAM" id="SSF81767">
    <property type="entry name" value="Pre-protein crosslinking domain of SecA"/>
    <property type="match status" value="1"/>
</dbReference>
<dbReference type="PROSITE" id="PS01312">
    <property type="entry name" value="SECA"/>
    <property type="match status" value="1"/>
</dbReference>
<dbReference type="PROSITE" id="PS51196">
    <property type="entry name" value="SECA_MOTOR_DEAD"/>
    <property type="match status" value="1"/>
</dbReference>
<proteinExistence type="inferred from homology"/>
<keyword id="KW-0067">ATP-binding</keyword>
<keyword id="KW-0997">Cell inner membrane</keyword>
<keyword id="KW-1003">Cell membrane</keyword>
<keyword id="KW-0963">Cytoplasm</keyword>
<keyword id="KW-0472">Membrane</keyword>
<keyword id="KW-0479">Metal-binding</keyword>
<keyword id="KW-0547">Nucleotide-binding</keyword>
<keyword id="KW-0653">Protein transport</keyword>
<keyword id="KW-1185">Reference proteome</keyword>
<keyword id="KW-1278">Translocase</keyword>
<keyword id="KW-0811">Translocation</keyword>
<keyword id="KW-0813">Transport</keyword>
<keyword id="KW-0862">Zinc</keyword>
<reference key="1">
    <citation type="submission" date="2006-12" db="EMBL/GenBank/DDBJ databases">
        <title>Complete sequence of Chlorobium phaeobacteroides DSM 266.</title>
        <authorList>
            <consortium name="US DOE Joint Genome Institute"/>
            <person name="Copeland A."/>
            <person name="Lucas S."/>
            <person name="Lapidus A."/>
            <person name="Barry K."/>
            <person name="Detter J.C."/>
            <person name="Glavina del Rio T."/>
            <person name="Hammon N."/>
            <person name="Israni S."/>
            <person name="Pitluck S."/>
            <person name="Goltsman E."/>
            <person name="Schmutz J."/>
            <person name="Larimer F."/>
            <person name="Land M."/>
            <person name="Hauser L."/>
            <person name="Mikhailova N."/>
            <person name="Li T."/>
            <person name="Overmann J."/>
            <person name="Bryant D.A."/>
            <person name="Richardson P."/>
        </authorList>
    </citation>
    <scope>NUCLEOTIDE SEQUENCE [LARGE SCALE GENOMIC DNA]</scope>
    <source>
        <strain>DSM 266 / SMG 266 / 2430</strain>
    </source>
</reference>
<gene>
    <name evidence="1" type="primary">secA</name>
    <name type="ordered locus">Cpha266_1266</name>
</gene>
<protein>
    <recommendedName>
        <fullName evidence="1">Protein translocase subunit SecA</fullName>
        <ecNumber evidence="1">7.4.2.8</ecNumber>
    </recommendedName>
</protein>
<sequence length="1022" mass="116381">MLKIFEKVFGSKHDKDIKRIQPTIQRINEIQASFQSLSDEALREKGSLLRQQVRSRLLPLEQQKKELALKLENPDILPADADNINASLDALGEEYDKVTALALEESLPDVFALVKETCRRLKGHNYQVMGREMIWDMVPYDVQLIGGIVLHSGKITEMATGEGKTLVSTLPVFLNALTGRGVHVVTVNDYLAQRDKEWMNPVFAFHGLTVGVILNTMRPEERKRQYLCDVTYGTNNEFGFDYLRDNMAGTVEEMVQRDFYFAIVDEVDSVLIDEARTPLIISGPVPNADNSKFQEIKPWIEHLVRSQQQLVASCLVEAEKLLKTKPNDFQAGLALLRVKRGQPKNSRYIKMLSQQGIAKLVQSTENEYLKDNASQMHEVDDELYFAVDEKAGTIDLTDKGRAFLSKLSHQDTDLFLLPDVGTEIAAIEGSSSFSTAEKIKQKDAVYRLFADRSERLHNISQLLKAYSLFERDDEYVVQDGKVMIVDEFTGRILSGRRYSDGLHQAIEAKENVRIEGETQTMATITIQNFFRQYHKLAGMTGTAETEASEFYEIYKLDVVVIPTNKPVVRKDMDDLVYKTRREKYNAVVLKVEELQKKGQPVLVGTASVEVSETLSRMLRAKRIVHNVLNAKQNDREAEVVAEAGQRSAVTIATNMAGRGTDIKLGEGVRELGGLYILGSERHESRRIDRQLRGRAGRQGDPGESVFFVSLEDELMRLFGSERVISVMDKLGHEEGDVIEHSMITKSIERAQKKVEEQNFSIRKRLLEYDDVLNQQRDVIYTRRRNGLQKDRLRSDIFDLLEDYCDVVVKKYQKGADGMALEEQVLRELSVEFRPEKAEFNDDTVGGVADKLFNAAHDFYLRKEREVPEDIMRQIEKYAVLSVIDKKWRDHLREIDSLREGINLRAYGQKDPLLEYKQEAFRLFVELLREIELETLSLAFKLFPITPEEAHDIEVRQKKEALRTEKLVAQHEEAGSILSHESDVPSGTAAQQPIKADVKPGRNDLCPCGSGKKYKNCHGQQQP</sequence>
<feature type="chain" id="PRO_0000320771" description="Protein translocase subunit SecA">
    <location>
        <begin position="1"/>
        <end position="1022"/>
    </location>
</feature>
<feature type="region of interest" description="Disordered" evidence="2">
    <location>
        <begin position="973"/>
        <end position="1001"/>
    </location>
</feature>
<feature type="binding site" evidence="1">
    <location>
        <position position="143"/>
    </location>
    <ligand>
        <name>ATP</name>
        <dbReference type="ChEBI" id="CHEBI:30616"/>
    </ligand>
</feature>
<feature type="binding site" evidence="1">
    <location>
        <begin position="161"/>
        <end position="165"/>
    </location>
    <ligand>
        <name>ATP</name>
        <dbReference type="ChEBI" id="CHEBI:30616"/>
    </ligand>
</feature>
<feature type="binding site" evidence="1">
    <location>
        <position position="661"/>
    </location>
    <ligand>
        <name>ATP</name>
        <dbReference type="ChEBI" id="CHEBI:30616"/>
    </ligand>
</feature>
<feature type="binding site" evidence="1">
    <location>
        <position position="1005"/>
    </location>
    <ligand>
        <name>Zn(2+)</name>
        <dbReference type="ChEBI" id="CHEBI:29105"/>
    </ligand>
</feature>
<feature type="binding site" evidence="1">
    <location>
        <position position="1007"/>
    </location>
    <ligand>
        <name>Zn(2+)</name>
        <dbReference type="ChEBI" id="CHEBI:29105"/>
    </ligand>
</feature>
<feature type="binding site" evidence="1">
    <location>
        <position position="1016"/>
    </location>
    <ligand>
        <name>Zn(2+)</name>
        <dbReference type="ChEBI" id="CHEBI:29105"/>
    </ligand>
</feature>
<feature type="binding site" evidence="1">
    <location>
        <position position="1017"/>
    </location>
    <ligand>
        <name>Zn(2+)</name>
        <dbReference type="ChEBI" id="CHEBI:29105"/>
    </ligand>
</feature>
<organism>
    <name type="scientific">Chlorobium phaeobacteroides (strain DSM 266 / SMG 266 / 2430)</name>
    <dbReference type="NCBI Taxonomy" id="290317"/>
    <lineage>
        <taxon>Bacteria</taxon>
        <taxon>Pseudomonadati</taxon>
        <taxon>Chlorobiota</taxon>
        <taxon>Chlorobiia</taxon>
        <taxon>Chlorobiales</taxon>
        <taxon>Chlorobiaceae</taxon>
        <taxon>Chlorobium/Pelodictyon group</taxon>
        <taxon>Chlorobium</taxon>
    </lineage>
</organism>
<accession>A1BFX2</accession>
<name>SECA_CHLPD</name>
<comment type="function">
    <text evidence="1">Part of the Sec protein translocase complex. Interacts with the SecYEG preprotein conducting channel. Has a central role in coupling the hydrolysis of ATP to the transfer of proteins into and across the cell membrane, serving as an ATP-driven molecular motor driving the stepwise translocation of polypeptide chains across the membrane.</text>
</comment>
<comment type="catalytic activity">
    <reaction evidence="1">
        <text>ATP + H2O + cellular proteinSide 1 = ADP + phosphate + cellular proteinSide 2.</text>
        <dbReference type="EC" id="7.4.2.8"/>
    </reaction>
</comment>
<comment type="cofactor">
    <cofactor evidence="1">
        <name>Zn(2+)</name>
        <dbReference type="ChEBI" id="CHEBI:29105"/>
    </cofactor>
    <text evidence="1">May bind 1 zinc ion per subunit.</text>
</comment>
<comment type="subunit">
    <text evidence="1">Monomer and homodimer. Part of the essential Sec protein translocation apparatus which comprises SecA, SecYEG and auxiliary proteins SecDF. Other proteins may also be involved.</text>
</comment>
<comment type="subcellular location">
    <subcellularLocation>
        <location evidence="1">Cell inner membrane</location>
        <topology evidence="1">Peripheral membrane protein</topology>
        <orientation evidence="1">Cytoplasmic side</orientation>
    </subcellularLocation>
    <subcellularLocation>
        <location evidence="1">Cytoplasm</location>
    </subcellularLocation>
    <text evidence="1">Distribution is 50-50.</text>
</comment>
<comment type="similarity">
    <text evidence="1">Belongs to the SecA family.</text>
</comment>